<dbReference type="EC" id="2.1.1.61" evidence="1"/>
<dbReference type="EC" id="1.5.-.-" evidence="1"/>
<dbReference type="EMBL" id="CP000026">
    <property type="protein sequence ID" value="AAV76487.1"/>
    <property type="status" value="ALT_INIT"/>
    <property type="molecule type" value="Genomic_DNA"/>
</dbReference>
<dbReference type="SMR" id="Q5PCW7"/>
<dbReference type="KEGG" id="spt:SPA0485"/>
<dbReference type="HOGENOM" id="CLU_022427_1_0_6"/>
<dbReference type="Proteomes" id="UP000008185">
    <property type="component" value="Chromosome"/>
</dbReference>
<dbReference type="GO" id="GO:0005737">
    <property type="term" value="C:cytoplasm"/>
    <property type="evidence" value="ECO:0007669"/>
    <property type="project" value="UniProtKB-SubCell"/>
</dbReference>
<dbReference type="GO" id="GO:0050660">
    <property type="term" value="F:flavin adenine dinucleotide binding"/>
    <property type="evidence" value="ECO:0007669"/>
    <property type="project" value="UniProtKB-UniRule"/>
</dbReference>
<dbReference type="GO" id="GO:0016645">
    <property type="term" value="F:oxidoreductase activity, acting on the CH-NH group of donors"/>
    <property type="evidence" value="ECO:0007669"/>
    <property type="project" value="InterPro"/>
</dbReference>
<dbReference type="GO" id="GO:0004808">
    <property type="term" value="F:tRNA (5-methylaminomethyl-2-thiouridylate)(34)-methyltransferase activity"/>
    <property type="evidence" value="ECO:0007669"/>
    <property type="project" value="UniProtKB-EC"/>
</dbReference>
<dbReference type="GO" id="GO:0032259">
    <property type="term" value="P:methylation"/>
    <property type="evidence" value="ECO:0007669"/>
    <property type="project" value="UniProtKB-KW"/>
</dbReference>
<dbReference type="GO" id="GO:0002098">
    <property type="term" value="P:tRNA wobble uridine modification"/>
    <property type="evidence" value="ECO:0007669"/>
    <property type="project" value="TreeGrafter"/>
</dbReference>
<dbReference type="FunFam" id="3.40.50.150:FF:000107">
    <property type="entry name" value="tRNA 5-methylaminomethyl-2-thiouridine biosynthesis bifunctional protein MnmC"/>
    <property type="match status" value="1"/>
</dbReference>
<dbReference type="Gene3D" id="3.30.9.10">
    <property type="entry name" value="D-Amino Acid Oxidase, subunit A, domain 2"/>
    <property type="match status" value="1"/>
</dbReference>
<dbReference type="Gene3D" id="3.50.50.60">
    <property type="entry name" value="FAD/NAD(P)-binding domain"/>
    <property type="match status" value="1"/>
</dbReference>
<dbReference type="Gene3D" id="3.40.50.150">
    <property type="entry name" value="Vaccinia Virus protein VP39"/>
    <property type="match status" value="1"/>
</dbReference>
<dbReference type="HAMAP" id="MF_01102">
    <property type="entry name" value="MnmC"/>
    <property type="match status" value="1"/>
</dbReference>
<dbReference type="InterPro" id="IPR006076">
    <property type="entry name" value="FAD-dep_OxRdtase"/>
</dbReference>
<dbReference type="InterPro" id="IPR036188">
    <property type="entry name" value="FAD/NAD-bd_sf"/>
</dbReference>
<dbReference type="InterPro" id="IPR008471">
    <property type="entry name" value="MnmC-like_methylTransf"/>
</dbReference>
<dbReference type="InterPro" id="IPR029063">
    <property type="entry name" value="SAM-dependent_MTases_sf"/>
</dbReference>
<dbReference type="InterPro" id="IPR023032">
    <property type="entry name" value="tRNA_MAMT_biosynth_bifunc_MnmC"/>
</dbReference>
<dbReference type="InterPro" id="IPR047785">
    <property type="entry name" value="tRNA_MNMC2"/>
</dbReference>
<dbReference type="InterPro" id="IPR017610">
    <property type="entry name" value="tRNA_S-uridine_synth_MnmC_C"/>
</dbReference>
<dbReference type="NCBIfam" id="TIGR03197">
    <property type="entry name" value="MnmC_Cterm"/>
    <property type="match status" value="1"/>
</dbReference>
<dbReference type="NCBIfam" id="NF002480">
    <property type="entry name" value="PRK01747.1-1"/>
    <property type="match status" value="1"/>
</dbReference>
<dbReference type="NCBIfam" id="NF002481">
    <property type="entry name" value="PRK01747.1-2"/>
    <property type="match status" value="1"/>
</dbReference>
<dbReference type="NCBIfam" id="NF002482">
    <property type="entry name" value="PRK01747.1-3"/>
    <property type="match status" value="1"/>
</dbReference>
<dbReference type="NCBIfam" id="NF002484">
    <property type="entry name" value="PRK01747.1-5"/>
    <property type="match status" value="1"/>
</dbReference>
<dbReference type="NCBIfam" id="NF033855">
    <property type="entry name" value="tRNA_MNMC2"/>
    <property type="match status" value="1"/>
</dbReference>
<dbReference type="PANTHER" id="PTHR13847">
    <property type="entry name" value="SARCOSINE DEHYDROGENASE-RELATED"/>
    <property type="match status" value="1"/>
</dbReference>
<dbReference type="PANTHER" id="PTHR13847:SF283">
    <property type="entry name" value="TRNA 5-METHYLAMINOMETHYL-2-THIOURIDINE BIOSYNTHESIS BIFUNCTIONAL PROTEIN MNMC"/>
    <property type="match status" value="1"/>
</dbReference>
<dbReference type="Pfam" id="PF01266">
    <property type="entry name" value="DAO"/>
    <property type="match status" value="1"/>
</dbReference>
<dbReference type="Pfam" id="PF05430">
    <property type="entry name" value="Methyltransf_30"/>
    <property type="match status" value="1"/>
</dbReference>
<dbReference type="SUPFAM" id="SSF51905">
    <property type="entry name" value="FAD/NAD(P)-binding domain"/>
    <property type="match status" value="1"/>
</dbReference>
<feature type="chain" id="PRO_0000095025" description="tRNA 5-methylaminomethyl-2-thiouridine biosynthesis bifunctional protein MnmC">
    <location>
        <begin position="1"/>
        <end position="666"/>
    </location>
</feature>
<feature type="region of interest" description="tRNA (mnm(5)s(2)U34)-methyltransferase">
    <location>
        <begin position="1"/>
        <end position="245"/>
    </location>
</feature>
<feature type="region of interest" description="FAD-dependent cmnm(5)s(2)U34 oxidoreductase">
    <location>
        <begin position="270"/>
        <end position="666"/>
    </location>
</feature>
<accession>Q5PCW7</accession>
<gene>
    <name evidence="1" type="primary">mnmC</name>
    <name type="ordered locus">SPA0485</name>
</gene>
<protein>
    <recommendedName>
        <fullName evidence="1">tRNA 5-methylaminomethyl-2-thiouridine biosynthesis bifunctional protein MnmC</fullName>
        <shortName evidence="1">tRNA mnm(5)s(2)U biosynthesis bifunctional protein</shortName>
    </recommendedName>
    <domain>
        <recommendedName>
            <fullName evidence="1">tRNA (mnm(5)s(2)U34)-methyltransferase</fullName>
            <ecNumber evidence="1">2.1.1.61</ecNumber>
        </recommendedName>
    </domain>
    <domain>
        <recommendedName>
            <fullName evidence="1">FAD-dependent cmnm(5)s(2)U34 oxidoreductase</fullName>
            <ecNumber evidence="1">1.5.-.-</ecNumber>
        </recommendedName>
    </domain>
</protein>
<sequence length="666" mass="73811">MKQYAIQPATLEFNAEGTPVSRDFDDVYFSNDNGLEETRYVFLGGNRLAERFPVHSHPLFIVAESGFGTGLNFLTLWQAFDSFRSAHPQATLQRLHFISFEKFPLTRDDLALAHQHWPELAPWAEQLQAQWPLPLPGCHRLLLDRGRVTLDLWFGDINELTDQLDATLNQTVDAWFLDGFAPAKNPDMWTPNLFNAMARLARPGATLATFTSAGFVRRGLQEAGFTMQKRKGFGRKREMLCGVMEQHRMPTLSAPWFYRSGSEKRETAIIGGGIASALLSLALLRRGWQVTLYCADDQPAQGASGNRQGALYPLLSKHDAAINRFFPTAFTFARRLYDALPVSFDHDWCGVTQLGWDEKSQQKITQMLSLALPAGLASALNAEEAEQAVGVTTRCGGITYPAGSWLCPEQLTRAVIALATEQGLQTRFRHTLTSLVAQESRWQLRFTSGETASHETVVLANGHQINRFDQTQPLPVYAVGGQVSHIPTTPALSALRQVLCYDGYLTPQNPHNQQHCIGASYHRGDESTVWREEDQRQNRQRLLDCFPDAKWATEVDVSGNSARCGVRCATRDHLPMVGNVPDYHATLTHYADLADNKTSAAPAPVYPGLFVLGALGSRGLCSAPLCAEILAAQMSNEPIPLDASTLAALNPNRLWVRKLLKGKAVK</sequence>
<name>MNMC_SALPA</name>
<evidence type="ECO:0000255" key="1">
    <source>
        <dbReference type="HAMAP-Rule" id="MF_01102"/>
    </source>
</evidence>
<evidence type="ECO:0000305" key="2"/>
<keyword id="KW-0963">Cytoplasm</keyword>
<keyword id="KW-0274">FAD</keyword>
<keyword id="KW-0285">Flavoprotein</keyword>
<keyword id="KW-0489">Methyltransferase</keyword>
<keyword id="KW-0511">Multifunctional enzyme</keyword>
<keyword id="KW-0560">Oxidoreductase</keyword>
<keyword id="KW-0949">S-adenosyl-L-methionine</keyword>
<keyword id="KW-0808">Transferase</keyword>
<keyword id="KW-0819">tRNA processing</keyword>
<reference key="1">
    <citation type="journal article" date="2004" name="Nat. Genet.">
        <title>Comparison of genome degradation in Paratyphi A and Typhi, human-restricted serovars of Salmonella enterica that cause typhoid.</title>
        <authorList>
            <person name="McClelland M."/>
            <person name="Sanderson K.E."/>
            <person name="Clifton S.W."/>
            <person name="Latreille P."/>
            <person name="Porwollik S."/>
            <person name="Sabo A."/>
            <person name="Meyer R."/>
            <person name="Bieri T."/>
            <person name="Ozersky P."/>
            <person name="McLellan M."/>
            <person name="Harkins C.R."/>
            <person name="Wang C."/>
            <person name="Nguyen C."/>
            <person name="Berghoff A."/>
            <person name="Elliott G."/>
            <person name="Kohlberg S."/>
            <person name="Strong C."/>
            <person name="Du F."/>
            <person name="Carter J."/>
            <person name="Kremizki C."/>
            <person name="Layman D."/>
            <person name="Leonard S."/>
            <person name="Sun H."/>
            <person name="Fulton L."/>
            <person name="Nash W."/>
            <person name="Miner T."/>
            <person name="Minx P."/>
            <person name="Delehaunty K."/>
            <person name="Fronick C."/>
            <person name="Magrini V."/>
            <person name="Nhan M."/>
            <person name="Warren W."/>
            <person name="Florea L."/>
            <person name="Spieth J."/>
            <person name="Wilson R.K."/>
        </authorList>
    </citation>
    <scope>NUCLEOTIDE SEQUENCE [LARGE SCALE GENOMIC DNA]</scope>
    <source>
        <strain>ATCC 9150 / SARB42</strain>
    </source>
</reference>
<organism>
    <name type="scientific">Salmonella paratyphi A (strain ATCC 9150 / SARB42)</name>
    <dbReference type="NCBI Taxonomy" id="295319"/>
    <lineage>
        <taxon>Bacteria</taxon>
        <taxon>Pseudomonadati</taxon>
        <taxon>Pseudomonadota</taxon>
        <taxon>Gammaproteobacteria</taxon>
        <taxon>Enterobacterales</taxon>
        <taxon>Enterobacteriaceae</taxon>
        <taxon>Salmonella</taxon>
    </lineage>
</organism>
<proteinExistence type="inferred from homology"/>
<comment type="function">
    <text evidence="1">Catalyzes the last two steps in the biosynthesis of 5-methylaminomethyl-2-thiouridine (mnm(5)s(2)U) at the wobble position (U34) in tRNA. Catalyzes the FAD-dependent demodification of cmnm(5)s(2)U34 to nm(5)s(2)U34, followed by the transfer of a methyl group from S-adenosyl-L-methionine to nm(5)s(2)U34, to form mnm(5)s(2)U34.</text>
</comment>
<comment type="catalytic activity">
    <reaction evidence="1">
        <text>5-aminomethyl-2-thiouridine(34) in tRNA + S-adenosyl-L-methionine = 5-methylaminomethyl-2-thiouridine(34) in tRNA + S-adenosyl-L-homocysteine + H(+)</text>
        <dbReference type="Rhea" id="RHEA:19569"/>
        <dbReference type="Rhea" id="RHEA-COMP:10195"/>
        <dbReference type="Rhea" id="RHEA-COMP:10197"/>
        <dbReference type="ChEBI" id="CHEBI:15378"/>
        <dbReference type="ChEBI" id="CHEBI:57856"/>
        <dbReference type="ChEBI" id="CHEBI:59789"/>
        <dbReference type="ChEBI" id="CHEBI:74454"/>
        <dbReference type="ChEBI" id="CHEBI:74455"/>
        <dbReference type="EC" id="2.1.1.61"/>
    </reaction>
</comment>
<comment type="cofactor">
    <cofactor evidence="1">
        <name>FAD</name>
        <dbReference type="ChEBI" id="CHEBI:57692"/>
    </cofactor>
</comment>
<comment type="subcellular location">
    <subcellularLocation>
        <location evidence="1">Cytoplasm</location>
    </subcellularLocation>
</comment>
<comment type="similarity">
    <text evidence="1">In the N-terminal section; belongs to the methyltransferase superfamily. tRNA (mnm(5)s(2)U34)-methyltransferase family.</text>
</comment>
<comment type="similarity">
    <text evidence="1">In the C-terminal section; belongs to the DAO family.</text>
</comment>
<comment type="sequence caution" evidence="2">
    <conflict type="erroneous initiation">
        <sequence resource="EMBL-CDS" id="AAV76487"/>
    </conflict>
</comment>